<organism>
    <name type="scientific">Gallus gallus</name>
    <name type="common">Chicken</name>
    <dbReference type="NCBI Taxonomy" id="9031"/>
    <lineage>
        <taxon>Eukaryota</taxon>
        <taxon>Metazoa</taxon>
        <taxon>Chordata</taxon>
        <taxon>Craniata</taxon>
        <taxon>Vertebrata</taxon>
        <taxon>Euteleostomi</taxon>
        <taxon>Archelosauria</taxon>
        <taxon>Archosauria</taxon>
        <taxon>Dinosauria</taxon>
        <taxon>Saurischia</taxon>
        <taxon>Theropoda</taxon>
        <taxon>Coelurosauria</taxon>
        <taxon>Aves</taxon>
        <taxon>Neognathae</taxon>
        <taxon>Galloanserae</taxon>
        <taxon>Galliformes</taxon>
        <taxon>Phasianidae</taxon>
        <taxon>Phasianinae</taxon>
        <taxon>Gallus</taxon>
    </lineage>
</organism>
<comment type="function">
    <text evidence="1">RNA-binding protein that specifically bind the 3'-UTR of some transcripts, leading to maintain their stability. Also acts as a mRNA splicing factor. May play a role in myogenic differentiation (By similarity).</text>
</comment>
<comment type="subcellular location">
    <subcellularLocation>
        <location evidence="1">Cytoplasm</location>
        <location evidence="1">Cytosol</location>
    </subcellularLocation>
    <subcellularLocation>
        <location evidence="1">Nucleus</location>
    </subcellularLocation>
</comment>
<comment type="similarity">
    <text evidence="3">Belongs to the RBM38 family.</text>
</comment>
<proteinExistence type="evidence at transcript level"/>
<feature type="chain" id="PRO_0000355183" description="RNA-binding protein 38">
    <location>
        <begin position="1"/>
        <end position="215"/>
    </location>
</feature>
<feature type="domain" description="RRM" evidence="2">
    <location>
        <begin position="11"/>
        <end position="88"/>
    </location>
</feature>
<sequence length="215" mass="23453">MHTVQKDTTFTKIFVGGLPYHTTDSSLRKYFEVFGDIEEAVVITDRQTGKSRGYGFVTMADRAAAERACKDPNPIIDGRKANVNLAYLGAKPRSIQTGFTIGVQQLHPAFIQRPFGLTPHYVYPQAIIQPSVVIPTPVQSIASPYIDYTAASQAYSQYTTAAYDQYPYAASPAAGFVGYGYTGAVQPPITASTPAAPATAFVQYQPQQLQPDRMQ</sequence>
<accession>Q5ZJX4</accession>
<keyword id="KW-0963">Cytoplasm</keyword>
<keyword id="KW-0221">Differentiation</keyword>
<keyword id="KW-0507">mRNA processing</keyword>
<keyword id="KW-0508">mRNA splicing</keyword>
<keyword id="KW-0539">Nucleus</keyword>
<keyword id="KW-1185">Reference proteome</keyword>
<keyword id="KW-0694">RNA-binding</keyword>
<evidence type="ECO:0000250" key="1"/>
<evidence type="ECO:0000255" key="2">
    <source>
        <dbReference type="PROSITE-ProRule" id="PRU00176"/>
    </source>
</evidence>
<evidence type="ECO:0000305" key="3"/>
<gene>
    <name type="primary">RBM38</name>
    <name type="ORF">RCJMB04_14l15</name>
</gene>
<reference key="1">
    <citation type="journal article" date="2005" name="Genome Biol.">
        <title>Full-length cDNAs from chicken bursal lymphocytes to facilitate gene function analysis.</title>
        <authorList>
            <person name="Caldwell R.B."/>
            <person name="Kierzek A.M."/>
            <person name="Arakawa H."/>
            <person name="Bezzubov Y."/>
            <person name="Zaim J."/>
            <person name="Fiedler P."/>
            <person name="Kutter S."/>
            <person name="Blagodatski A."/>
            <person name="Kostovska D."/>
            <person name="Koter M."/>
            <person name="Plachy J."/>
            <person name="Carninci P."/>
            <person name="Hayashizaki Y."/>
            <person name="Buerstedde J.-M."/>
        </authorList>
    </citation>
    <scope>NUCLEOTIDE SEQUENCE [LARGE SCALE MRNA]</scope>
    <source>
        <strain>CB</strain>
        <tissue>Bursa of Fabricius</tissue>
    </source>
</reference>
<protein>
    <recommendedName>
        <fullName>RNA-binding protein 38</fullName>
    </recommendedName>
    <alternativeName>
        <fullName>RNA-binding motif protein 38</fullName>
    </alternativeName>
</protein>
<dbReference type="EMBL" id="AJ720310">
    <property type="protein sequence ID" value="CAG31969.1"/>
    <property type="molecule type" value="mRNA"/>
</dbReference>
<dbReference type="RefSeq" id="NP_001292022.1">
    <property type="nucleotide sequence ID" value="NM_001305093.1"/>
</dbReference>
<dbReference type="SMR" id="Q5ZJX4"/>
<dbReference type="FunCoup" id="Q5ZJX4">
    <property type="interactions" value="353"/>
</dbReference>
<dbReference type="STRING" id="9031.ENSGALP00000042182"/>
<dbReference type="PaxDb" id="9031-ENSGALP00000042182"/>
<dbReference type="GeneID" id="768866"/>
<dbReference type="KEGG" id="gga:768866"/>
<dbReference type="CTD" id="55544"/>
<dbReference type="VEuPathDB" id="HostDB:geneid_768866"/>
<dbReference type="eggNOG" id="KOG0149">
    <property type="taxonomic scope" value="Eukaryota"/>
</dbReference>
<dbReference type="HOGENOM" id="CLU_065652_2_0_1"/>
<dbReference type="InParanoid" id="Q5ZJX4"/>
<dbReference type="OMA" id="TFVQYPA"/>
<dbReference type="OrthoDB" id="4207594at2759"/>
<dbReference type="PhylomeDB" id="Q5ZJX4"/>
<dbReference type="PRO" id="PR:Q5ZJX4"/>
<dbReference type="Proteomes" id="UP000000539">
    <property type="component" value="Chromosome 20"/>
</dbReference>
<dbReference type="Bgee" id="ENSGALG00000026081">
    <property type="expression patterns" value="Expressed in skeletal muscle tissue and 13 other cell types or tissues"/>
</dbReference>
<dbReference type="GO" id="GO:0005829">
    <property type="term" value="C:cytosol"/>
    <property type="evidence" value="ECO:0000318"/>
    <property type="project" value="GO_Central"/>
</dbReference>
<dbReference type="GO" id="GO:0005634">
    <property type="term" value="C:nucleus"/>
    <property type="evidence" value="ECO:0000318"/>
    <property type="project" value="GO_Central"/>
</dbReference>
<dbReference type="GO" id="GO:0003730">
    <property type="term" value="F:mRNA 3'-UTR binding"/>
    <property type="evidence" value="ECO:0000318"/>
    <property type="project" value="GO_Central"/>
</dbReference>
<dbReference type="GO" id="GO:0030154">
    <property type="term" value="P:cell differentiation"/>
    <property type="evidence" value="ECO:0007669"/>
    <property type="project" value="UniProtKB-KW"/>
</dbReference>
<dbReference type="GO" id="GO:0006397">
    <property type="term" value="P:mRNA processing"/>
    <property type="evidence" value="ECO:0007669"/>
    <property type="project" value="UniProtKB-KW"/>
</dbReference>
<dbReference type="GO" id="GO:0043484">
    <property type="term" value="P:regulation of RNA splicing"/>
    <property type="evidence" value="ECO:0000318"/>
    <property type="project" value="GO_Central"/>
</dbReference>
<dbReference type="GO" id="GO:0008380">
    <property type="term" value="P:RNA splicing"/>
    <property type="evidence" value="ECO:0007669"/>
    <property type="project" value="UniProtKB-KW"/>
</dbReference>
<dbReference type="CDD" id="cd12384">
    <property type="entry name" value="RRM_RBM24_RBM38_like"/>
    <property type="match status" value="1"/>
</dbReference>
<dbReference type="FunFam" id="3.30.70.330:FF:000524">
    <property type="entry name" value="RNA-binding motif protein 38"/>
    <property type="match status" value="1"/>
</dbReference>
<dbReference type="Gene3D" id="3.30.70.330">
    <property type="match status" value="1"/>
</dbReference>
<dbReference type="InterPro" id="IPR012677">
    <property type="entry name" value="Nucleotide-bd_a/b_plait_sf"/>
</dbReference>
<dbReference type="InterPro" id="IPR035979">
    <property type="entry name" value="RBD_domain_sf"/>
</dbReference>
<dbReference type="InterPro" id="IPR050886">
    <property type="entry name" value="RNA-binding_reg"/>
</dbReference>
<dbReference type="InterPro" id="IPR000504">
    <property type="entry name" value="RRM_dom"/>
</dbReference>
<dbReference type="PANTHER" id="PTHR48024">
    <property type="entry name" value="GEO13361P1-RELATED"/>
    <property type="match status" value="1"/>
</dbReference>
<dbReference type="PANTHER" id="PTHR48024:SF28">
    <property type="entry name" value="RNA-BINDING PROTEIN 38"/>
    <property type="match status" value="1"/>
</dbReference>
<dbReference type="Pfam" id="PF00076">
    <property type="entry name" value="RRM_1"/>
    <property type="match status" value="1"/>
</dbReference>
<dbReference type="SMART" id="SM00360">
    <property type="entry name" value="RRM"/>
    <property type="match status" value="1"/>
</dbReference>
<dbReference type="SUPFAM" id="SSF54928">
    <property type="entry name" value="RNA-binding domain, RBD"/>
    <property type="match status" value="1"/>
</dbReference>
<dbReference type="PROSITE" id="PS50102">
    <property type="entry name" value="RRM"/>
    <property type="match status" value="1"/>
</dbReference>
<name>RBM38_CHICK</name>